<gene>
    <name evidence="1" type="primary">pckA</name>
    <name type="ordered locus">FN1120</name>
</gene>
<name>PCKA_FUSNN</name>
<protein>
    <recommendedName>
        <fullName evidence="1">Phosphoenolpyruvate carboxykinase (ATP)</fullName>
        <shortName evidence="1">PCK</shortName>
        <shortName evidence="1">PEP carboxykinase</shortName>
        <shortName evidence="1">PEPCK</shortName>
        <ecNumber evidence="1">4.1.1.49</ecNumber>
    </recommendedName>
</protein>
<evidence type="ECO:0000255" key="1">
    <source>
        <dbReference type="HAMAP-Rule" id="MF_00453"/>
    </source>
</evidence>
<evidence type="ECO:0000305" key="2"/>
<organism>
    <name type="scientific">Fusobacterium nucleatum subsp. nucleatum (strain ATCC 25586 / DSM 15643 / BCRC 10681 / CIP 101130 / JCM 8532 / KCTC 2640 / LMG 13131 / VPI 4355)</name>
    <dbReference type="NCBI Taxonomy" id="190304"/>
    <lineage>
        <taxon>Bacteria</taxon>
        <taxon>Fusobacteriati</taxon>
        <taxon>Fusobacteriota</taxon>
        <taxon>Fusobacteriia</taxon>
        <taxon>Fusobacteriales</taxon>
        <taxon>Fusobacteriaceae</taxon>
        <taxon>Fusobacterium</taxon>
    </lineage>
</organism>
<sequence length="525" mass="58796">MYGLEKLGINNVTAAHYNLSPAQLVEKALANNEGILSDTGAFVISTGKYTGRAPDDKFFVDTPEVHKYIDWSRNQPIEKEKFDAIFGKLVAYLQNREIFIFDGRAGANPEYTRRFRVINELASQNLFIHQLLIRTDEEYNENNDIDFTIISAPNFHCVPEIDGVNSEAAIIINFEKKIAIICATKYSGEIKKSVFSIMNYIMPHENILPMHCSANMDPVTHETAIFFGLSGTGKTTLSADPNRKLIGDDEHGWCDKGIFNFEGGCYAKCINLKEESEPEIYRAIKFGSLVENVVVDPITRKIQYEDASITPNTRVGYPIDYIPNAELSGVGGIPKVVIFLTADSFGVLPPISRLSQEAAMYHFVTGFTAKLAGTELGVKEPVPTFSTCFGEPFMPMDPSVYAEMLGERLKKHNTKVYLINTGWSGGAYGTGKRINLKYTRAMVTAVLNGYFDNAEYKHDDIFNLDIPQSCPGVPSEIMNPIDTWQDRDKYIIAAKKLANLFYNNFKEKYPNMPENITNAGPKYND</sequence>
<keyword id="KW-0067">ATP-binding</keyword>
<keyword id="KW-0963">Cytoplasm</keyword>
<keyword id="KW-0210">Decarboxylase</keyword>
<keyword id="KW-0312">Gluconeogenesis</keyword>
<keyword id="KW-0456">Lyase</keyword>
<keyword id="KW-0464">Manganese</keyword>
<keyword id="KW-0479">Metal-binding</keyword>
<keyword id="KW-0547">Nucleotide-binding</keyword>
<keyword id="KW-1185">Reference proteome</keyword>
<dbReference type="EC" id="4.1.1.49" evidence="1"/>
<dbReference type="EMBL" id="AE009951">
    <property type="protein sequence ID" value="AAL95316.1"/>
    <property type="status" value="ALT_INIT"/>
    <property type="molecule type" value="Genomic_DNA"/>
</dbReference>
<dbReference type="RefSeq" id="NP_604017.1">
    <property type="nucleotide sequence ID" value="NC_003454.1"/>
</dbReference>
<dbReference type="RefSeq" id="WP_011016914.1">
    <property type="nucleotide sequence ID" value="NZ_OZ209243.1"/>
</dbReference>
<dbReference type="SMR" id="Q8REI2"/>
<dbReference type="FunCoup" id="Q8REI2">
    <property type="interactions" value="142"/>
</dbReference>
<dbReference type="STRING" id="190304.FN1120"/>
<dbReference type="PaxDb" id="190304-FN1120"/>
<dbReference type="EnsemblBacteria" id="AAL95316">
    <property type="protein sequence ID" value="AAL95316"/>
    <property type="gene ID" value="FN1120"/>
</dbReference>
<dbReference type="GeneID" id="79784100"/>
<dbReference type="KEGG" id="fnu:FN1120"/>
<dbReference type="PATRIC" id="fig|190304.8.peg.1685"/>
<dbReference type="eggNOG" id="COG1866">
    <property type="taxonomic scope" value="Bacteria"/>
</dbReference>
<dbReference type="HOGENOM" id="CLU_018247_0_1_0"/>
<dbReference type="InParanoid" id="Q8REI2"/>
<dbReference type="UniPathway" id="UPA00138"/>
<dbReference type="Proteomes" id="UP000002521">
    <property type="component" value="Chromosome"/>
</dbReference>
<dbReference type="GO" id="GO:0005829">
    <property type="term" value="C:cytosol"/>
    <property type="evidence" value="ECO:0000318"/>
    <property type="project" value="GO_Central"/>
</dbReference>
<dbReference type="GO" id="GO:0005524">
    <property type="term" value="F:ATP binding"/>
    <property type="evidence" value="ECO:0007669"/>
    <property type="project" value="UniProtKB-UniRule"/>
</dbReference>
<dbReference type="GO" id="GO:0046872">
    <property type="term" value="F:metal ion binding"/>
    <property type="evidence" value="ECO:0007669"/>
    <property type="project" value="UniProtKB-KW"/>
</dbReference>
<dbReference type="GO" id="GO:0004612">
    <property type="term" value="F:phosphoenolpyruvate carboxykinase (ATP) activity"/>
    <property type="evidence" value="ECO:0000318"/>
    <property type="project" value="GO_Central"/>
</dbReference>
<dbReference type="GO" id="GO:0006094">
    <property type="term" value="P:gluconeogenesis"/>
    <property type="evidence" value="ECO:0000318"/>
    <property type="project" value="GO_Central"/>
</dbReference>
<dbReference type="CDD" id="cd00484">
    <property type="entry name" value="PEPCK_ATP"/>
    <property type="match status" value="1"/>
</dbReference>
<dbReference type="Gene3D" id="3.90.228.20">
    <property type="match status" value="1"/>
</dbReference>
<dbReference type="Gene3D" id="3.40.449.10">
    <property type="entry name" value="Phosphoenolpyruvate Carboxykinase, domain 1"/>
    <property type="match status" value="1"/>
</dbReference>
<dbReference type="Gene3D" id="2.170.8.10">
    <property type="entry name" value="Phosphoenolpyruvate Carboxykinase, domain 2"/>
    <property type="match status" value="1"/>
</dbReference>
<dbReference type="HAMAP" id="MF_00453">
    <property type="entry name" value="PEPCK_ATP"/>
    <property type="match status" value="1"/>
</dbReference>
<dbReference type="InterPro" id="IPR001272">
    <property type="entry name" value="PEP_carboxykinase_ATP"/>
</dbReference>
<dbReference type="InterPro" id="IPR013035">
    <property type="entry name" value="PEP_carboxykinase_C"/>
</dbReference>
<dbReference type="InterPro" id="IPR008210">
    <property type="entry name" value="PEP_carboxykinase_N"/>
</dbReference>
<dbReference type="InterPro" id="IPR015994">
    <property type="entry name" value="PEPCK_ATP_CS"/>
</dbReference>
<dbReference type="NCBIfam" id="TIGR00224">
    <property type="entry name" value="pckA"/>
    <property type="match status" value="1"/>
</dbReference>
<dbReference type="NCBIfam" id="NF006820">
    <property type="entry name" value="PRK09344.1-2"/>
    <property type="match status" value="1"/>
</dbReference>
<dbReference type="NCBIfam" id="NF006821">
    <property type="entry name" value="PRK09344.1-3"/>
    <property type="match status" value="1"/>
</dbReference>
<dbReference type="PANTHER" id="PTHR30031:SF0">
    <property type="entry name" value="PHOSPHOENOLPYRUVATE CARBOXYKINASE (ATP)"/>
    <property type="match status" value="1"/>
</dbReference>
<dbReference type="PANTHER" id="PTHR30031">
    <property type="entry name" value="PHOSPHOENOLPYRUVATE CARBOXYKINASE ATP"/>
    <property type="match status" value="1"/>
</dbReference>
<dbReference type="Pfam" id="PF01293">
    <property type="entry name" value="PEPCK_ATP"/>
    <property type="match status" value="1"/>
</dbReference>
<dbReference type="PIRSF" id="PIRSF006294">
    <property type="entry name" value="PEP_crbxkin"/>
    <property type="match status" value="1"/>
</dbReference>
<dbReference type="SUPFAM" id="SSF68923">
    <property type="entry name" value="PEP carboxykinase N-terminal domain"/>
    <property type="match status" value="1"/>
</dbReference>
<dbReference type="SUPFAM" id="SSF53795">
    <property type="entry name" value="PEP carboxykinase-like"/>
    <property type="match status" value="1"/>
</dbReference>
<dbReference type="PROSITE" id="PS00532">
    <property type="entry name" value="PEPCK_ATP"/>
    <property type="match status" value="1"/>
</dbReference>
<reference key="1">
    <citation type="journal article" date="2002" name="J. Bacteriol.">
        <title>Genome sequence and analysis of the oral bacterium Fusobacterium nucleatum strain ATCC 25586.</title>
        <authorList>
            <person name="Kapatral V."/>
            <person name="Anderson I."/>
            <person name="Ivanova N."/>
            <person name="Reznik G."/>
            <person name="Los T."/>
            <person name="Lykidis A."/>
            <person name="Bhattacharyya A."/>
            <person name="Bartman A."/>
            <person name="Gardner W."/>
            <person name="Grechkin G."/>
            <person name="Zhu L."/>
            <person name="Vasieva O."/>
            <person name="Chu L."/>
            <person name="Kogan Y."/>
            <person name="Chaga O."/>
            <person name="Goltsman E."/>
            <person name="Bernal A."/>
            <person name="Larsen N."/>
            <person name="D'Souza M."/>
            <person name="Walunas T."/>
            <person name="Pusch G."/>
            <person name="Haselkorn R."/>
            <person name="Fonstein M."/>
            <person name="Kyrpides N.C."/>
            <person name="Overbeek R."/>
        </authorList>
    </citation>
    <scope>NUCLEOTIDE SEQUENCE [LARGE SCALE GENOMIC DNA]</scope>
    <source>
        <strain>ATCC 25586 / DSM 15643 / BCRC 10681 / CIP 101130 / JCM 8532 / KCTC 2640 / LMG 13131 / VPI 4355</strain>
    </source>
</reference>
<feature type="chain" id="PRO_0000203822" description="Phosphoenolpyruvate carboxykinase (ATP)">
    <location>
        <begin position="1"/>
        <end position="525"/>
    </location>
</feature>
<feature type="binding site" evidence="1">
    <location>
        <position position="52"/>
    </location>
    <ligand>
        <name>substrate</name>
    </ligand>
</feature>
<feature type="binding site" evidence="1">
    <location>
        <position position="186"/>
    </location>
    <ligand>
        <name>substrate</name>
    </ligand>
</feature>
<feature type="binding site" evidence="1">
    <location>
        <position position="192"/>
    </location>
    <ligand>
        <name>ATP</name>
        <dbReference type="ChEBI" id="CHEBI:30616"/>
    </ligand>
</feature>
<feature type="binding site" evidence="1">
    <location>
        <position position="192"/>
    </location>
    <ligand>
        <name>Mn(2+)</name>
        <dbReference type="ChEBI" id="CHEBI:29035"/>
    </ligand>
</feature>
<feature type="binding site" evidence="1">
    <location>
        <position position="192"/>
    </location>
    <ligand>
        <name>substrate</name>
    </ligand>
</feature>
<feature type="binding site" evidence="1">
    <location>
        <position position="211"/>
    </location>
    <ligand>
        <name>ATP</name>
        <dbReference type="ChEBI" id="CHEBI:30616"/>
    </ligand>
</feature>
<feature type="binding site" evidence="1">
    <location>
        <position position="211"/>
    </location>
    <ligand>
        <name>Mn(2+)</name>
        <dbReference type="ChEBI" id="CHEBI:29035"/>
    </ligand>
</feature>
<feature type="binding site" evidence="1">
    <location>
        <begin position="228"/>
        <end position="236"/>
    </location>
    <ligand>
        <name>ATP</name>
        <dbReference type="ChEBI" id="CHEBI:30616"/>
    </ligand>
</feature>
<feature type="binding site" evidence="1">
    <location>
        <position position="249"/>
    </location>
    <ligand>
        <name>Mn(2+)</name>
        <dbReference type="ChEBI" id="CHEBI:29035"/>
    </ligand>
</feature>
<feature type="binding site" evidence="1">
    <location>
        <position position="277"/>
    </location>
    <ligand>
        <name>ATP</name>
        <dbReference type="ChEBI" id="CHEBI:30616"/>
    </ligand>
</feature>
<feature type="binding site" evidence="1">
    <location>
        <position position="314"/>
    </location>
    <ligand>
        <name>ATP</name>
        <dbReference type="ChEBI" id="CHEBI:30616"/>
    </ligand>
</feature>
<feature type="binding site" evidence="1">
    <location>
        <position position="314"/>
    </location>
    <ligand>
        <name>substrate</name>
    </ligand>
</feature>
<feature type="binding site" evidence="1">
    <location>
        <begin position="433"/>
        <end position="434"/>
    </location>
    <ligand>
        <name>ATP</name>
        <dbReference type="ChEBI" id="CHEBI:30616"/>
    </ligand>
</feature>
<feature type="binding site" evidence="1">
    <location>
        <position position="439"/>
    </location>
    <ligand>
        <name>ATP</name>
        <dbReference type="ChEBI" id="CHEBI:30616"/>
    </ligand>
</feature>
<accession>Q8REI2</accession>
<proteinExistence type="inferred from homology"/>
<comment type="function">
    <text evidence="1">Involved in the gluconeogenesis. Catalyzes the conversion of oxaloacetate (OAA) to phosphoenolpyruvate (PEP) through direct phosphoryl transfer between the nucleoside triphosphate and OAA.</text>
</comment>
<comment type="catalytic activity">
    <reaction evidence="1">
        <text>oxaloacetate + ATP = phosphoenolpyruvate + ADP + CO2</text>
        <dbReference type="Rhea" id="RHEA:18617"/>
        <dbReference type="ChEBI" id="CHEBI:16452"/>
        <dbReference type="ChEBI" id="CHEBI:16526"/>
        <dbReference type="ChEBI" id="CHEBI:30616"/>
        <dbReference type="ChEBI" id="CHEBI:58702"/>
        <dbReference type="ChEBI" id="CHEBI:456216"/>
        <dbReference type="EC" id="4.1.1.49"/>
    </reaction>
</comment>
<comment type="cofactor">
    <cofactor evidence="1">
        <name>Mn(2+)</name>
        <dbReference type="ChEBI" id="CHEBI:29035"/>
    </cofactor>
    <text evidence="1">Binds 1 Mn(2+) ion per subunit.</text>
</comment>
<comment type="pathway">
    <text evidence="1">Carbohydrate biosynthesis; gluconeogenesis.</text>
</comment>
<comment type="subcellular location">
    <subcellularLocation>
        <location evidence="1">Cytoplasm</location>
    </subcellularLocation>
</comment>
<comment type="similarity">
    <text evidence="1">Belongs to the phosphoenolpyruvate carboxykinase (ATP) family.</text>
</comment>
<comment type="sequence caution" evidence="2">
    <conflict type="erroneous initiation">
        <sequence resource="EMBL-CDS" id="AAL95316"/>
    </conflict>
    <text>Extended N-terminus.</text>
</comment>